<gene>
    <name evidence="5" type="primary">olcL</name>
</gene>
<reference key="1">
    <citation type="journal article" date="2015" name="Chem. Sci.">
        <title>Genome mining and molecular characterization of the biosynthetic gene cluster of a diterpenic meroterpenoid, 15-deoxyoxalicine B, in Penicillium canescens.</title>
        <authorList>
            <person name="Yaegashi J."/>
            <person name="Romsdahl J."/>
            <person name="Chiang Y.M."/>
            <person name="Wang C.C.C."/>
        </authorList>
    </citation>
    <scope>FUNCTION</scope>
    <scope>DISRUPTION PHENOTYPE</scope>
    <scope>SUBCELLULAR LOCATION</scope>
    <scope>PATHWAY</scope>
</reference>
<reference key="2">
    <citation type="journal article" date="2016" name="Chem. Sci.">
        <title>Correction: Genome mining and molecular characterization of the biosynthetic gene cluster of a diterpenic meroterpenoid, 15-deoxyoxalicine B, in Penicillium canescens.</title>
        <authorList>
            <person name="Yaegashi J."/>
            <person name="Romsdahl J."/>
            <person name="Chiang Y.M."/>
            <person name="Wang C.C.C."/>
        </authorList>
    </citation>
    <scope>ERRATUM OF PUBMED:30090271</scope>
</reference>
<name>OLCL_PENCN</name>
<protein>
    <recommendedName>
        <fullName evidence="5">MFS-type transporter olcL</fullName>
    </recommendedName>
    <alternativeName>
        <fullName evidence="5">15-deoxyoxalicine B biosynthesis cluster protein L</fullName>
    </alternativeName>
</protein>
<accession>P9WEP4</accession>
<keyword id="KW-0325">Glycoprotein</keyword>
<keyword id="KW-0472">Membrane</keyword>
<keyword id="KW-0576">Peroxisome</keyword>
<keyword id="KW-0812">Transmembrane</keyword>
<keyword id="KW-1133">Transmembrane helix</keyword>
<keyword id="KW-0813">Transport</keyword>
<evidence type="ECO:0000255" key="1"/>
<evidence type="ECO:0000255" key="2">
    <source>
        <dbReference type="PROSITE-ProRule" id="PRU00498"/>
    </source>
</evidence>
<evidence type="ECO:0000256" key="3">
    <source>
        <dbReference type="SAM" id="MobiDB-lite"/>
    </source>
</evidence>
<evidence type="ECO:0000269" key="4">
    <source>
    </source>
</evidence>
<evidence type="ECO:0000303" key="5">
    <source>
    </source>
</evidence>
<evidence type="ECO:0000305" key="6"/>
<evidence type="ECO:0000305" key="7">
    <source>
    </source>
</evidence>
<sequence>MANIGGSNAVSSAQGSQISDSPTTVDDRLDEHKETSTQSIDHSENITQSPTSLQKPPDESNATPVGFGEDGCQSDSQEYPNSWRLAAIMIGVCLAVFSMALDNTILATAIPKITDQFTSLGDVGWYGSVYPLTNCCLTLVFGKLYTFYSTKWVYLSALAVFEIGSLICGATPSSLGLIIGRAIAGLGSSGIYLGSMIILSQSVPLQKRPLFTSLVGGLYGVAGVAGPLLGGAFTDYVSWRWCFYINPLFGAVTALFILLFFDGKEPIKSPGKIKEQISQFDLIGLFFFLPGMISLLLALQWGGQQYNWQSGRIIGLFVCSICLLSIFIMVQWRQKEKATVTLRMIKNKNVWGASLFNFCITGSFLVFSYYLPVWFQSIKNVSATKSGLMNLPMLLGVILCSIISGYGVGRIGYYTPFMYAAPIVSAIGAGLLSTFQANFGPSQWIGYQALYGIGLGLGLSQPIVVIQAAIPLIDIPSAIAIVTFIQSLGGSVSVSIAQNVFRNELLRGLAQNAPKVDAHKLITAGPTTLRYVVPAELLERVLVAYNSAITHAFYVGAAFSVLAMIGALPIQWISVKGRE</sequence>
<dbReference type="SMR" id="P9WEP4"/>
<dbReference type="GlyCosmos" id="P9WEP4">
    <property type="glycosylation" value="2 sites, No reported glycans"/>
</dbReference>
<dbReference type="GO" id="GO:0005778">
    <property type="term" value="C:peroxisomal membrane"/>
    <property type="evidence" value="ECO:0007669"/>
    <property type="project" value="UniProtKB-SubCell"/>
</dbReference>
<dbReference type="GO" id="GO:0005886">
    <property type="term" value="C:plasma membrane"/>
    <property type="evidence" value="ECO:0007669"/>
    <property type="project" value="TreeGrafter"/>
</dbReference>
<dbReference type="GO" id="GO:0022857">
    <property type="term" value="F:transmembrane transporter activity"/>
    <property type="evidence" value="ECO:0007669"/>
    <property type="project" value="InterPro"/>
</dbReference>
<dbReference type="CDD" id="cd17502">
    <property type="entry name" value="MFS_Azr1_MDR_like"/>
    <property type="match status" value="1"/>
</dbReference>
<dbReference type="FunFam" id="1.20.1250.20:FF:000196">
    <property type="entry name" value="MFS toxin efflux pump (AflT)"/>
    <property type="match status" value="1"/>
</dbReference>
<dbReference type="FunFam" id="1.20.1720.10:FF:000012">
    <property type="entry name" value="MFS toxin efflux pump (AflT)"/>
    <property type="match status" value="1"/>
</dbReference>
<dbReference type="Gene3D" id="1.20.1250.20">
    <property type="entry name" value="MFS general substrate transporter like domains"/>
    <property type="match status" value="1"/>
</dbReference>
<dbReference type="Gene3D" id="1.20.1720.10">
    <property type="entry name" value="Multidrug resistance protein D"/>
    <property type="match status" value="1"/>
</dbReference>
<dbReference type="InterPro" id="IPR011701">
    <property type="entry name" value="MFS"/>
</dbReference>
<dbReference type="InterPro" id="IPR020846">
    <property type="entry name" value="MFS_dom"/>
</dbReference>
<dbReference type="InterPro" id="IPR036259">
    <property type="entry name" value="MFS_trans_sf"/>
</dbReference>
<dbReference type="PANTHER" id="PTHR23501">
    <property type="entry name" value="MAJOR FACILITATOR SUPERFAMILY"/>
    <property type="match status" value="1"/>
</dbReference>
<dbReference type="PANTHER" id="PTHR23501:SF199">
    <property type="entry name" value="MFS EFFLUX TRANSPORTER INPD-RELATED"/>
    <property type="match status" value="1"/>
</dbReference>
<dbReference type="Pfam" id="PF07690">
    <property type="entry name" value="MFS_1"/>
    <property type="match status" value="1"/>
</dbReference>
<dbReference type="PRINTS" id="PR01036">
    <property type="entry name" value="TCRTETB"/>
</dbReference>
<dbReference type="SUPFAM" id="SSF103473">
    <property type="entry name" value="MFS general substrate transporter"/>
    <property type="match status" value="1"/>
</dbReference>
<dbReference type="PROSITE" id="PS50850">
    <property type="entry name" value="MFS"/>
    <property type="match status" value="1"/>
</dbReference>
<proteinExistence type="inferred from homology"/>
<organism>
    <name type="scientific">Penicillium canescens</name>
    <dbReference type="NCBI Taxonomy" id="5083"/>
    <lineage>
        <taxon>Eukaryota</taxon>
        <taxon>Fungi</taxon>
        <taxon>Dikarya</taxon>
        <taxon>Ascomycota</taxon>
        <taxon>Pezizomycotina</taxon>
        <taxon>Eurotiomycetes</taxon>
        <taxon>Eurotiomycetidae</taxon>
        <taxon>Eurotiales</taxon>
        <taxon>Aspergillaceae</taxon>
        <taxon>Penicillium</taxon>
    </lineage>
</organism>
<comment type="function">
    <text evidence="4 7">MFS-type transporter; part of the gene cluster that mediates the biosynthesis of 15-deoxyoxalicine B (PubMed:30090271). The first step of the pathway is the synthesis of nicotinyl-CoA from nicotinic acid by the nicotinic acid-CoA ligase olcI (PubMed:30090271). Nicotinyl-CoA is then a substrate of polyketide synthase olcA to produce 4-hydroxy-6-(3-pyridinyl)-2H-pyran-2-one (HPPO) which is further prenylated by the polyprenyl transferase olcH to yield geranylgeranyl-HPPO (PubMed:30090271). Geranylgeranyl pyrophosphate is provided by the cluster-specific geranylgeranyl pyrophosphate synthase olcC (PubMed:30090271). The FAD-dependent monooxygenase olcE catalyzes the epoxidation of geranylgeranyl-HPPO and the terpene cyclase olcD catalyzes the cyclization of the terpenoid component, resulting in the formation of the tricyclic terpene moiety seen in predecaturin E (PubMed:30090271). The cytochrome P450 monooxygenase then catalyzes the allylic oxidation of predecaturin E, which is followed by spirocylization with concomitant loss of one molecule of water to form decaturin E (PubMed:30090271). Decaturin E is the substrate of the cytochrome P450 monooxygenase olcJ which hydroxylates it at the C-29 position to form decaturin F (PubMed:30090271). The short-chain dehydrogenase/reductase olcF may catalyze the oxidation of decaturin F to generate the 29-hydroxyl-27-one intermediate, and subsequent hemiacetal formation probably leads to the formation of decaturin C (Probable). The dioxygenase olcK may be a peroxisomal enzyme that catalyzes the hydroxylation of decaturin C into decaturin A once decaturin C is shuttled into the peroxisome by the MFS transporter olcL (Probable). Finally the cytochrome P450 monooxygenase olcB catalyzes the oxidative rearrangement to yield 15-deoxyoxalicine B (PubMed:30090271). In the absence of olcJ, decaturin E may be shunted to a pathway in which it is oxidized to a ketone, possibly by olcF, to form decaturin D, which undergoes further allylic oxidation to yield decaturin G (PubMed:30090271). Moreover, in the absence of oclK or oclL, oclB can convert decaturin C into 15-deoxyoxalicine A (PubMed:30090271).</text>
</comment>
<comment type="subcellular location">
    <subcellularLocation>
        <location evidence="7">Peroxisome membrane</location>
        <topology evidence="1">Multi-pass membrane protein</topology>
    </subcellularLocation>
    <text evidence="7">OlcL may be inserted in the peroxisomal membrane viathe import receptor pex19.</text>
</comment>
<comment type="disruption phenotype">
    <text evidence="4">Abolishes the production of 15-deoxyoxalicine B and accumulates decaturin C and 5-deoxyoxalicine A.</text>
</comment>
<comment type="miscellaneous">
    <text evidence="4">The 15-deoxyoxalicine B cluster is a rare cluster that contains its own geranylgeranyl pyrophosphate synthase (olcC), in contrast to other related clusters which rely on a FPP/GGPP synthase localized outside of the cluster.</text>
</comment>
<comment type="similarity">
    <text evidence="6">Belongs to the major facilitator superfamily. TCR/Tet family.</text>
</comment>
<feature type="chain" id="PRO_0000453896" description="MFS-type transporter olcL">
    <location>
        <begin position="1"/>
        <end position="579"/>
    </location>
</feature>
<feature type="transmembrane region" description="Helical" evidence="1">
    <location>
        <begin position="85"/>
        <end position="105"/>
    </location>
</feature>
<feature type="transmembrane region" description="Helical" evidence="1">
    <location>
        <begin position="121"/>
        <end position="141"/>
    </location>
</feature>
<feature type="transmembrane region" description="Helical" evidence="1">
    <location>
        <begin position="159"/>
        <end position="179"/>
    </location>
</feature>
<feature type="transmembrane region" description="Helical" evidence="1">
    <location>
        <begin position="183"/>
        <end position="203"/>
    </location>
</feature>
<feature type="transmembrane region" description="Helical" evidence="1">
    <location>
        <begin position="214"/>
        <end position="234"/>
    </location>
</feature>
<feature type="transmembrane region" description="Helical" evidence="1">
    <location>
        <begin position="241"/>
        <end position="261"/>
    </location>
</feature>
<feature type="transmembrane region" description="Helical" evidence="1">
    <location>
        <begin position="282"/>
        <end position="302"/>
    </location>
</feature>
<feature type="transmembrane region" description="Helical" evidence="1">
    <location>
        <begin position="310"/>
        <end position="330"/>
    </location>
</feature>
<feature type="transmembrane region" description="Helical" evidence="1">
    <location>
        <begin position="355"/>
        <end position="375"/>
    </location>
</feature>
<feature type="transmembrane region" description="Helical" evidence="1">
    <location>
        <begin position="388"/>
        <end position="408"/>
    </location>
</feature>
<feature type="transmembrane region" description="Helical" evidence="1">
    <location>
        <begin position="411"/>
        <end position="431"/>
    </location>
</feature>
<feature type="transmembrane region" description="Helical" evidence="1">
    <location>
        <begin position="439"/>
        <end position="459"/>
    </location>
</feature>
<feature type="transmembrane region" description="Helical" evidence="1">
    <location>
        <begin position="479"/>
        <end position="501"/>
    </location>
</feature>
<feature type="transmembrane region" description="Helical" evidence="1">
    <location>
        <begin position="553"/>
        <end position="573"/>
    </location>
</feature>
<feature type="region of interest" description="Disordered" evidence="3">
    <location>
        <begin position="1"/>
        <end position="75"/>
    </location>
</feature>
<feature type="compositionally biased region" description="Polar residues" evidence="3">
    <location>
        <begin position="1"/>
        <end position="24"/>
    </location>
</feature>
<feature type="compositionally biased region" description="Basic and acidic residues" evidence="3">
    <location>
        <begin position="25"/>
        <end position="35"/>
    </location>
</feature>
<feature type="compositionally biased region" description="Polar residues" evidence="3">
    <location>
        <begin position="36"/>
        <end position="54"/>
    </location>
</feature>
<feature type="glycosylation site" description="N-linked (GlcNAc...) asparagine" evidence="2">
    <location>
        <position position="45"/>
    </location>
</feature>
<feature type="glycosylation site" description="N-linked (GlcNAc...) asparagine" evidence="2">
    <location>
        <position position="380"/>
    </location>
</feature>